<accession>B0BUR0</accession>
<organism>
    <name type="scientific">Rickettsia rickettsii (strain Iowa)</name>
    <dbReference type="NCBI Taxonomy" id="452659"/>
    <lineage>
        <taxon>Bacteria</taxon>
        <taxon>Pseudomonadati</taxon>
        <taxon>Pseudomonadota</taxon>
        <taxon>Alphaproteobacteria</taxon>
        <taxon>Rickettsiales</taxon>
        <taxon>Rickettsiaceae</taxon>
        <taxon>Rickettsieae</taxon>
        <taxon>Rickettsia</taxon>
        <taxon>spotted fever group</taxon>
    </lineage>
</organism>
<sequence>MRTGIIAQKIGMTSVFNDKGERISLTLVKVDDCQVVGHKTLEKHGYNALVIGVKDKKISRVTKPMRQVFANAKISPKTKLKEFRISEENFIDIAASLEVDHFTAGQFVDITATTIGKGFAGSMKRHNFRGLEASHGVSISHRSHGSTGQRQDPGKVFKGKKMAGHMGCNQVTIQNLKIFAVDKERKLIMIQGSIPGHKNSYLSVKDAIKKISITV</sequence>
<protein>
    <recommendedName>
        <fullName evidence="1">Large ribosomal subunit protein uL3</fullName>
    </recommendedName>
    <alternativeName>
        <fullName evidence="3">50S ribosomal protein L3</fullName>
    </alternativeName>
</protein>
<evidence type="ECO:0000255" key="1">
    <source>
        <dbReference type="HAMAP-Rule" id="MF_01325"/>
    </source>
</evidence>
<evidence type="ECO:0000256" key="2">
    <source>
        <dbReference type="SAM" id="MobiDB-lite"/>
    </source>
</evidence>
<evidence type="ECO:0000305" key="3"/>
<name>RL3_RICRO</name>
<keyword id="KW-0488">Methylation</keyword>
<keyword id="KW-0687">Ribonucleoprotein</keyword>
<keyword id="KW-0689">Ribosomal protein</keyword>
<keyword id="KW-0694">RNA-binding</keyword>
<keyword id="KW-0699">rRNA-binding</keyword>
<proteinExistence type="inferred from homology"/>
<comment type="function">
    <text evidence="1">One of the primary rRNA binding proteins, it binds directly near the 3'-end of the 23S rRNA, where it nucleates assembly of the 50S subunit.</text>
</comment>
<comment type="subunit">
    <text evidence="1">Part of the 50S ribosomal subunit. Forms a cluster with proteins L14 and L19.</text>
</comment>
<comment type="PTM">
    <text evidence="1">Methylated by PrmB.</text>
</comment>
<comment type="similarity">
    <text evidence="1">Belongs to the universal ribosomal protein uL3 family.</text>
</comment>
<reference key="1">
    <citation type="journal article" date="2008" name="Infect. Immun.">
        <title>Genomic comparison of virulent Rickettsia rickettsii Sheila Smith and avirulent Rickettsia rickettsii Iowa.</title>
        <authorList>
            <person name="Ellison D.W."/>
            <person name="Clark T.R."/>
            <person name="Sturdevant D.E."/>
            <person name="Virtaneva K."/>
            <person name="Porcella S.F."/>
            <person name="Hackstadt T."/>
        </authorList>
    </citation>
    <scope>NUCLEOTIDE SEQUENCE [LARGE SCALE GENOMIC DNA]</scope>
    <source>
        <strain>Iowa</strain>
    </source>
</reference>
<feature type="chain" id="PRO_1000086456" description="Large ribosomal subunit protein uL3">
    <location>
        <begin position="1"/>
        <end position="215"/>
    </location>
</feature>
<feature type="region of interest" description="Disordered" evidence="2">
    <location>
        <begin position="136"/>
        <end position="155"/>
    </location>
</feature>
<feature type="modified residue" description="N5-methylglutamine" evidence="1">
    <location>
        <position position="151"/>
    </location>
</feature>
<gene>
    <name evidence="1" type="primary">rplC</name>
    <name type="ordered locus">RrIowa_1197</name>
</gene>
<dbReference type="EMBL" id="CP000766">
    <property type="protein sequence ID" value="ABY72970.1"/>
    <property type="molecule type" value="Genomic_DNA"/>
</dbReference>
<dbReference type="RefSeq" id="WP_012151152.1">
    <property type="nucleotide sequence ID" value="NC_010263.3"/>
</dbReference>
<dbReference type="SMR" id="B0BUR0"/>
<dbReference type="GeneID" id="79937670"/>
<dbReference type="KEGG" id="rrj:RrIowa_1197"/>
<dbReference type="eggNOG" id="COG0087">
    <property type="taxonomic scope" value="Bacteria"/>
</dbReference>
<dbReference type="HOGENOM" id="CLU_044142_2_0_5"/>
<dbReference type="Proteomes" id="UP000000796">
    <property type="component" value="Chromosome"/>
</dbReference>
<dbReference type="GO" id="GO:1990904">
    <property type="term" value="C:ribonucleoprotein complex"/>
    <property type="evidence" value="ECO:0007669"/>
    <property type="project" value="UniProtKB-KW"/>
</dbReference>
<dbReference type="GO" id="GO:0005840">
    <property type="term" value="C:ribosome"/>
    <property type="evidence" value="ECO:0007669"/>
    <property type="project" value="UniProtKB-KW"/>
</dbReference>
<dbReference type="GO" id="GO:0019843">
    <property type="term" value="F:rRNA binding"/>
    <property type="evidence" value="ECO:0007669"/>
    <property type="project" value="UniProtKB-UniRule"/>
</dbReference>
<dbReference type="GO" id="GO:0003735">
    <property type="term" value="F:structural constituent of ribosome"/>
    <property type="evidence" value="ECO:0007669"/>
    <property type="project" value="InterPro"/>
</dbReference>
<dbReference type="GO" id="GO:0006412">
    <property type="term" value="P:translation"/>
    <property type="evidence" value="ECO:0007669"/>
    <property type="project" value="UniProtKB-UniRule"/>
</dbReference>
<dbReference type="FunFam" id="2.40.30.10:FF:000004">
    <property type="entry name" value="50S ribosomal protein L3"/>
    <property type="match status" value="1"/>
</dbReference>
<dbReference type="Gene3D" id="3.30.160.810">
    <property type="match status" value="1"/>
</dbReference>
<dbReference type="Gene3D" id="2.40.30.10">
    <property type="entry name" value="Translation factors"/>
    <property type="match status" value="1"/>
</dbReference>
<dbReference type="HAMAP" id="MF_01325_B">
    <property type="entry name" value="Ribosomal_uL3_B"/>
    <property type="match status" value="1"/>
</dbReference>
<dbReference type="InterPro" id="IPR000597">
    <property type="entry name" value="Ribosomal_uL3"/>
</dbReference>
<dbReference type="InterPro" id="IPR019927">
    <property type="entry name" value="Ribosomal_uL3_bac/org-type"/>
</dbReference>
<dbReference type="InterPro" id="IPR019926">
    <property type="entry name" value="Ribosomal_uL3_CS"/>
</dbReference>
<dbReference type="InterPro" id="IPR009000">
    <property type="entry name" value="Transl_B-barrel_sf"/>
</dbReference>
<dbReference type="NCBIfam" id="TIGR03625">
    <property type="entry name" value="L3_bact"/>
    <property type="match status" value="1"/>
</dbReference>
<dbReference type="PANTHER" id="PTHR11229">
    <property type="entry name" value="50S RIBOSOMAL PROTEIN L3"/>
    <property type="match status" value="1"/>
</dbReference>
<dbReference type="PANTHER" id="PTHR11229:SF16">
    <property type="entry name" value="LARGE RIBOSOMAL SUBUNIT PROTEIN UL3C"/>
    <property type="match status" value="1"/>
</dbReference>
<dbReference type="Pfam" id="PF00297">
    <property type="entry name" value="Ribosomal_L3"/>
    <property type="match status" value="1"/>
</dbReference>
<dbReference type="SUPFAM" id="SSF50447">
    <property type="entry name" value="Translation proteins"/>
    <property type="match status" value="1"/>
</dbReference>
<dbReference type="PROSITE" id="PS00474">
    <property type="entry name" value="RIBOSOMAL_L3"/>
    <property type="match status" value="1"/>
</dbReference>